<reference key="1">
    <citation type="journal article" date="2011" name="J. Bacteriol.">
        <title>Comparative genomics of 28 Salmonella enterica isolates: evidence for CRISPR-mediated adaptive sublineage evolution.</title>
        <authorList>
            <person name="Fricke W.F."/>
            <person name="Mammel M.K."/>
            <person name="McDermott P.F."/>
            <person name="Tartera C."/>
            <person name="White D.G."/>
            <person name="Leclerc J.E."/>
            <person name="Ravel J."/>
            <person name="Cebula T.A."/>
        </authorList>
    </citation>
    <scope>NUCLEOTIDE SEQUENCE [LARGE SCALE GENOMIC DNA]</scope>
    <source>
        <strain>SL254</strain>
    </source>
</reference>
<dbReference type="EMBL" id="CP001113">
    <property type="protein sequence ID" value="ACF63070.1"/>
    <property type="molecule type" value="Genomic_DNA"/>
</dbReference>
<dbReference type="RefSeq" id="WP_001251971.1">
    <property type="nucleotide sequence ID" value="NZ_CCMR01000001.1"/>
</dbReference>
<dbReference type="SMR" id="B4SYD0"/>
<dbReference type="KEGG" id="see:SNSL254_A4145"/>
<dbReference type="HOGENOM" id="CLU_084338_2_0_6"/>
<dbReference type="Proteomes" id="UP000008824">
    <property type="component" value="Chromosome"/>
</dbReference>
<dbReference type="GO" id="GO:0005886">
    <property type="term" value="C:plasma membrane"/>
    <property type="evidence" value="ECO:0007669"/>
    <property type="project" value="UniProtKB-SubCell"/>
</dbReference>
<dbReference type="GO" id="GO:0045259">
    <property type="term" value="C:proton-transporting ATP synthase complex"/>
    <property type="evidence" value="ECO:0007669"/>
    <property type="project" value="UniProtKB-KW"/>
</dbReference>
<dbReference type="GO" id="GO:0005524">
    <property type="term" value="F:ATP binding"/>
    <property type="evidence" value="ECO:0007669"/>
    <property type="project" value="UniProtKB-UniRule"/>
</dbReference>
<dbReference type="GO" id="GO:0046933">
    <property type="term" value="F:proton-transporting ATP synthase activity, rotational mechanism"/>
    <property type="evidence" value="ECO:0007669"/>
    <property type="project" value="UniProtKB-UniRule"/>
</dbReference>
<dbReference type="CDD" id="cd12152">
    <property type="entry name" value="F1-ATPase_delta"/>
    <property type="match status" value="1"/>
</dbReference>
<dbReference type="FunFam" id="1.20.5.440:FF:000001">
    <property type="entry name" value="ATP synthase epsilon chain"/>
    <property type="match status" value="1"/>
</dbReference>
<dbReference type="FunFam" id="2.60.15.10:FF:000001">
    <property type="entry name" value="ATP synthase epsilon chain"/>
    <property type="match status" value="1"/>
</dbReference>
<dbReference type="Gene3D" id="1.20.5.440">
    <property type="entry name" value="ATP synthase delta/epsilon subunit, C-terminal domain"/>
    <property type="match status" value="1"/>
</dbReference>
<dbReference type="Gene3D" id="2.60.15.10">
    <property type="entry name" value="F0F1 ATP synthase delta/epsilon subunit, N-terminal"/>
    <property type="match status" value="1"/>
</dbReference>
<dbReference type="HAMAP" id="MF_00530">
    <property type="entry name" value="ATP_synth_epsil_bac"/>
    <property type="match status" value="1"/>
</dbReference>
<dbReference type="InterPro" id="IPR036794">
    <property type="entry name" value="ATP_F1_dsu/esu_C_sf"/>
</dbReference>
<dbReference type="InterPro" id="IPR001469">
    <property type="entry name" value="ATP_synth_F1_dsu/esu"/>
</dbReference>
<dbReference type="InterPro" id="IPR020546">
    <property type="entry name" value="ATP_synth_F1_dsu/esu_N"/>
</dbReference>
<dbReference type="InterPro" id="IPR020547">
    <property type="entry name" value="ATP_synth_F1_esu_C"/>
</dbReference>
<dbReference type="InterPro" id="IPR036771">
    <property type="entry name" value="ATPsynth_dsu/esu_N"/>
</dbReference>
<dbReference type="NCBIfam" id="TIGR01216">
    <property type="entry name" value="ATP_synt_epsi"/>
    <property type="match status" value="1"/>
</dbReference>
<dbReference type="NCBIfam" id="NF001847">
    <property type="entry name" value="PRK00571.1-4"/>
    <property type="match status" value="1"/>
</dbReference>
<dbReference type="PANTHER" id="PTHR13822">
    <property type="entry name" value="ATP SYNTHASE DELTA/EPSILON CHAIN"/>
    <property type="match status" value="1"/>
</dbReference>
<dbReference type="PANTHER" id="PTHR13822:SF10">
    <property type="entry name" value="ATP SYNTHASE EPSILON CHAIN, CHLOROPLASTIC"/>
    <property type="match status" value="1"/>
</dbReference>
<dbReference type="Pfam" id="PF00401">
    <property type="entry name" value="ATP-synt_DE"/>
    <property type="match status" value="1"/>
</dbReference>
<dbReference type="Pfam" id="PF02823">
    <property type="entry name" value="ATP-synt_DE_N"/>
    <property type="match status" value="1"/>
</dbReference>
<dbReference type="SUPFAM" id="SSF46604">
    <property type="entry name" value="Epsilon subunit of F1F0-ATP synthase C-terminal domain"/>
    <property type="match status" value="1"/>
</dbReference>
<dbReference type="SUPFAM" id="SSF51344">
    <property type="entry name" value="Epsilon subunit of F1F0-ATP synthase N-terminal domain"/>
    <property type="match status" value="1"/>
</dbReference>
<gene>
    <name evidence="1" type="primary">atpC</name>
    <name type="ordered locus">SNSL254_A4145</name>
</gene>
<organism>
    <name type="scientific">Salmonella newport (strain SL254)</name>
    <dbReference type="NCBI Taxonomy" id="423368"/>
    <lineage>
        <taxon>Bacteria</taxon>
        <taxon>Pseudomonadati</taxon>
        <taxon>Pseudomonadota</taxon>
        <taxon>Gammaproteobacteria</taxon>
        <taxon>Enterobacterales</taxon>
        <taxon>Enterobacteriaceae</taxon>
        <taxon>Salmonella</taxon>
    </lineage>
</organism>
<accession>B4SYD0</accession>
<sequence length="139" mass="15064">MAMTYHLDVVSAEQQMFSGLVEKIQVTGSEGELGIYPGHAPLLTAIKPGMIRIVKQHGHEEFIYLSGGILEVQPGSVTVLADTAIRGQDLDEARALEAKRKAEEHIKSSHGDVDYAQASAELAKAIAKLRVIELTKKAM</sequence>
<feature type="chain" id="PRO_1000127888" description="ATP synthase epsilon chain">
    <location>
        <begin position="1"/>
        <end position="139"/>
    </location>
</feature>
<evidence type="ECO:0000255" key="1">
    <source>
        <dbReference type="HAMAP-Rule" id="MF_00530"/>
    </source>
</evidence>
<protein>
    <recommendedName>
        <fullName evidence="1">ATP synthase epsilon chain</fullName>
    </recommendedName>
    <alternativeName>
        <fullName evidence="1">ATP synthase F1 sector epsilon subunit</fullName>
    </alternativeName>
    <alternativeName>
        <fullName evidence="1">F-ATPase epsilon subunit</fullName>
    </alternativeName>
</protein>
<comment type="function">
    <text evidence="1">Produces ATP from ADP in the presence of a proton gradient across the membrane.</text>
</comment>
<comment type="subunit">
    <text evidence="1">F-type ATPases have 2 components, CF(1) - the catalytic core - and CF(0) - the membrane proton channel. CF(1) has five subunits: alpha(3), beta(3), gamma(1), delta(1), epsilon(1). CF(0) has three main subunits: a, b and c.</text>
</comment>
<comment type="subcellular location">
    <subcellularLocation>
        <location evidence="1">Cell inner membrane</location>
        <topology evidence="1">Peripheral membrane protein</topology>
    </subcellularLocation>
</comment>
<comment type="similarity">
    <text evidence="1">Belongs to the ATPase epsilon chain family.</text>
</comment>
<name>ATPE_SALNS</name>
<proteinExistence type="inferred from homology"/>
<keyword id="KW-0066">ATP synthesis</keyword>
<keyword id="KW-0997">Cell inner membrane</keyword>
<keyword id="KW-1003">Cell membrane</keyword>
<keyword id="KW-0139">CF(1)</keyword>
<keyword id="KW-0375">Hydrogen ion transport</keyword>
<keyword id="KW-0406">Ion transport</keyword>
<keyword id="KW-0472">Membrane</keyword>
<keyword id="KW-0813">Transport</keyword>